<name>ACBD5_MOUSE</name>
<evidence type="ECO:0000250" key="1"/>
<evidence type="ECO:0000250" key="2">
    <source>
        <dbReference type="UniProtKB" id="Q5T8D3"/>
    </source>
</evidence>
<evidence type="ECO:0000255" key="3"/>
<evidence type="ECO:0000255" key="4">
    <source>
        <dbReference type="PROSITE-ProRule" id="PRU00573"/>
    </source>
</evidence>
<evidence type="ECO:0000256" key="5">
    <source>
        <dbReference type="SAM" id="MobiDB-lite"/>
    </source>
</evidence>
<evidence type="ECO:0000269" key="6">
    <source>
    </source>
</evidence>
<evidence type="ECO:0000303" key="7">
    <source>
    </source>
</evidence>
<evidence type="ECO:0000303" key="8">
    <source>
    </source>
</evidence>
<evidence type="ECO:0000305" key="9"/>
<evidence type="ECO:0007744" key="10">
    <source>
    </source>
</evidence>
<evidence type="ECO:0007744" key="11">
    <source>
    </source>
</evidence>
<evidence type="ECO:0007744" key="12">
    <source>
    </source>
</evidence>
<keyword id="KW-0007">Acetylation</keyword>
<keyword id="KW-0025">Alternative splicing</keyword>
<keyword id="KW-0072">Autophagy</keyword>
<keyword id="KW-0175">Coiled coil</keyword>
<keyword id="KW-0446">Lipid-binding</keyword>
<keyword id="KW-0472">Membrane</keyword>
<keyword id="KW-0576">Peroxisome</keyword>
<keyword id="KW-0597">Phosphoprotein</keyword>
<keyword id="KW-1185">Reference proteome</keyword>
<keyword id="KW-0812">Transmembrane</keyword>
<keyword id="KW-1133">Transmembrane helix</keyword>
<keyword id="KW-0813">Transport</keyword>
<accession>Q5XG73</accession>
<accession>A2AQX9</accession>
<accession>A2AQY0</accession>
<accession>Q6P7V7</accession>
<accession>Q7TSC2</accession>
<accession>Q8BKU6</accession>
<accession>Q8CI99</accession>
<accession>Q9CW41</accession>
<comment type="function">
    <text evidence="1">Acyl-CoA binding protein which acts as the peroxisome receptor for pexophagy but is dispensable for aggrephagy and nonselective autophagy. Binds medium- and long-chain acyl-CoA esters (By similarity).</text>
</comment>
<comment type="subcellular location">
    <subcellularLocation>
        <location evidence="6">Peroxisome membrane</location>
        <topology evidence="6">Single-pass membrane protein</topology>
    </subcellularLocation>
</comment>
<comment type="alternative products">
    <event type="alternative splicing"/>
    <isoform>
        <id>Q5XG73-1</id>
        <name>1</name>
        <sequence type="displayed"/>
    </isoform>
    <isoform>
        <id>Q5XG73-2</id>
        <name>2</name>
        <sequence type="described" ref="VSP_025450"/>
    </isoform>
    <isoform>
        <id>Q5XG73-3</id>
        <name>3</name>
        <sequence type="described" ref="VSP_025450 VSP_025451"/>
    </isoform>
</comment>
<comment type="similarity">
    <text evidence="9">Belongs to the ATG37 family.</text>
</comment>
<comment type="sequence caution" evidence="9">
    <conflict type="erroneous initiation">
        <sequence resource="EMBL-CDS" id="AAH35202"/>
    </conflict>
</comment>
<comment type="sequence caution" evidence="9">
    <conflict type="erroneous initiation">
        <sequence resource="EMBL-CDS" id="AAH53518"/>
    </conflict>
</comment>
<reference key="1">
    <citation type="journal article" date="2005" name="Science">
        <title>The transcriptional landscape of the mammalian genome.</title>
        <authorList>
            <person name="Carninci P."/>
            <person name="Kasukawa T."/>
            <person name="Katayama S."/>
            <person name="Gough J."/>
            <person name="Frith M.C."/>
            <person name="Maeda N."/>
            <person name="Oyama R."/>
            <person name="Ravasi T."/>
            <person name="Lenhard B."/>
            <person name="Wells C."/>
            <person name="Kodzius R."/>
            <person name="Shimokawa K."/>
            <person name="Bajic V.B."/>
            <person name="Brenner S.E."/>
            <person name="Batalov S."/>
            <person name="Forrest A.R."/>
            <person name="Zavolan M."/>
            <person name="Davis M.J."/>
            <person name="Wilming L.G."/>
            <person name="Aidinis V."/>
            <person name="Allen J.E."/>
            <person name="Ambesi-Impiombato A."/>
            <person name="Apweiler R."/>
            <person name="Aturaliya R.N."/>
            <person name="Bailey T.L."/>
            <person name="Bansal M."/>
            <person name="Baxter L."/>
            <person name="Beisel K.W."/>
            <person name="Bersano T."/>
            <person name="Bono H."/>
            <person name="Chalk A.M."/>
            <person name="Chiu K.P."/>
            <person name="Choudhary V."/>
            <person name="Christoffels A."/>
            <person name="Clutterbuck D.R."/>
            <person name="Crowe M.L."/>
            <person name="Dalla E."/>
            <person name="Dalrymple B.P."/>
            <person name="de Bono B."/>
            <person name="Della Gatta G."/>
            <person name="di Bernardo D."/>
            <person name="Down T."/>
            <person name="Engstrom P."/>
            <person name="Fagiolini M."/>
            <person name="Faulkner G."/>
            <person name="Fletcher C.F."/>
            <person name="Fukushima T."/>
            <person name="Furuno M."/>
            <person name="Futaki S."/>
            <person name="Gariboldi M."/>
            <person name="Georgii-Hemming P."/>
            <person name="Gingeras T.R."/>
            <person name="Gojobori T."/>
            <person name="Green R.E."/>
            <person name="Gustincich S."/>
            <person name="Harbers M."/>
            <person name="Hayashi Y."/>
            <person name="Hensch T.K."/>
            <person name="Hirokawa N."/>
            <person name="Hill D."/>
            <person name="Huminiecki L."/>
            <person name="Iacono M."/>
            <person name="Ikeo K."/>
            <person name="Iwama A."/>
            <person name="Ishikawa T."/>
            <person name="Jakt M."/>
            <person name="Kanapin A."/>
            <person name="Katoh M."/>
            <person name="Kawasawa Y."/>
            <person name="Kelso J."/>
            <person name="Kitamura H."/>
            <person name="Kitano H."/>
            <person name="Kollias G."/>
            <person name="Krishnan S.P."/>
            <person name="Kruger A."/>
            <person name="Kummerfeld S.K."/>
            <person name="Kurochkin I.V."/>
            <person name="Lareau L.F."/>
            <person name="Lazarevic D."/>
            <person name="Lipovich L."/>
            <person name="Liu J."/>
            <person name="Liuni S."/>
            <person name="McWilliam S."/>
            <person name="Madan Babu M."/>
            <person name="Madera M."/>
            <person name="Marchionni L."/>
            <person name="Matsuda H."/>
            <person name="Matsuzawa S."/>
            <person name="Miki H."/>
            <person name="Mignone F."/>
            <person name="Miyake S."/>
            <person name="Morris K."/>
            <person name="Mottagui-Tabar S."/>
            <person name="Mulder N."/>
            <person name="Nakano N."/>
            <person name="Nakauchi H."/>
            <person name="Ng P."/>
            <person name="Nilsson R."/>
            <person name="Nishiguchi S."/>
            <person name="Nishikawa S."/>
            <person name="Nori F."/>
            <person name="Ohara O."/>
            <person name="Okazaki Y."/>
            <person name="Orlando V."/>
            <person name="Pang K.C."/>
            <person name="Pavan W.J."/>
            <person name="Pavesi G."/>
            <person name="Pesole G."/>
            <person name="Petrovsky N."/>
            <person name="Piazza S."/>
            <person name="Reed J."/>
            <person name="Reid J.F."/>
            <person name="Ring B.Z."/>
            <person name="Ringwald M."/>
            <person name="Rost B."/>
            <person name="Ruan Y."/>
            <person name="Salzberg S.L."/>
            <person name="Sandelin A."/>
            <person name="Schneider C."/>
            <person name="Schoenbach C."/>
            <person name="Sekiguchi K."/>
            <person name="Semple C.A."/>
            <person name="Seno S."/>
            <person name="Sessa L."/>
            <person name="Sheng Y."/>
            <person name="Shibata Y."/>
            <person name="Shimada H."/>
            <person name="Shimada K."/>
            <person name="Silva D."/>
            <person name="Sinclair B."/>
            <person name="Sperling S."/>
            <person name="Stupka E."/>
            <person name="Sugiura K."/>
            <person name="Sultana R."/>
            <person name="Takenaka Y."/>
            <person name="Taki K."/>
            <person name="Tammoja K."/>
            <person name="Tan S.L."/>
            <person name="Tang S."/>
            <person name="Taylor M.S."/>
            <person name="Tegner J."/>
            <person name="Teichmann S.A."/>
            <person name="Ueda H.R."/>
            <person name="van Nimwegen E."/>
            <person name="Verardo R."/>
            <person name="Wei C.L."/>
            <person name="Yagi K."/>
            <person name="Yamanishi H."/>
            <person name="Zabarovsky E."/>
            <person name="Zhu S."/>
            <person name="Zimmer A."/>
            <person name="Hide W."/>
            <person name="Bult C."/>
            <person name="Grimmond S.M."/>
            <person name="Teasdale R.D."/>
            <person name="Liu E.T."/>
            <person name="Brusic V."/>
            <person name="Quackenbush J."/>
            <person name="Wahlestedt C."/>
            <person name="Mattick J.S."/>
            <person name="Hume D.A."/>
            <person name="Kai C."/>
            <person name="Sasaki D."/>
            <person name="Tomaru Y."/>
            <person name="Fukuda S."/>
            <person name="Kanamori-Katayama M."/>
            <person name="Suzuki M."/>
            <person name="Aoki J."/>
            <person name="Arakawa T."/>
            <person name="Iida J."/>
            <person name="Imamura K."/>
            <person name="Itoh M."/>
            <person name="Kato T."/>
            <person name="Kawaji H."/>
            <person name="Kawagashira N."/>
            <person name="Kawashima T."/>
            <person name="Kojima M."/>
            <person name="Kondo S."/>
            <person name="Konno H."/>
            <person name="Nakano K."/>
            <person name="Ninomiya N."/>
            <person name="Nishio T."/>
            <person name="Okada M."/>
            <person name="Plessy C."/>
            <person name="Shibata K."/>
            <person name="Shiraki T."/>
            <person name="Suzuki S."/>
            <person name="Tagami M."/>
            <person name="Waki K."/>
            <person name="Watahiki A."/>
            <person name="Okamura-Oho Y."/>
            <person name="Suzuki H."/>
            <person name="Kawai J."/>
            <person name="Hayashizaki Y."/>
        </authorList>
    </citation>
    <scope>NUCLEOTIDE SEQUENCE [LARGE SCALE MRNA] (ISOFORMS 2 AND 3)</scope>
    <source>
        <strain>C57BL/6J</strain>
        <tissue>Liver</tissue>
    </source>
</reference>
<reference key="2">
    <citation type="journal article" date="2009" name="PLoS Biol.">
        <title>Lineage-specific biology revealed by a finished genome assembly of the mouse.</title>
        <authorList>
            <person name="Church D.M."/>
            <person name="Goodstadt L."/>
            <person name="Hillier L.W."/>
            <person name="Zody M.C."/>
            <person name="Goldstein S."/>
            <person name="She X."/>
            <person name="Bult C.J."/>
            <person name="Agarwala R."/>
            <person name="Cherry J.L."/>
            <person name="DiCuccio M."/>
            <person name="Hlavina W."/>
            <person name="Kapustin Y."/>
            <person name="Meric P."/>
            <person name="Maglott D."/>
            <person name="Birtle Z."/>
            <person name="Marques A.C."/>
            <person name="Graves T."/>
            <person name="Zhou S."/>
            <person name="Teague B."/>
            <person name="Potamousis K."/>
            <person name="Churas C."/>
            <person name="Place M."/>
            <person name="Herschleb J."/>
            <person name="Runnheim R."/>
            <person name="Forrest D."/>
            <person name="Amos-Landgraf J."/>
            <person name="Schwartz D.C."/>
            <person name="Cheng Z."/>
            <person name="Lindblad-Toh K."/>
            <person name="Eichler E.E."/>
            <person name="Ponting C.P."/>
        </authorList>
    </citation>
    <scope>NUCLEOTIDE SEQUENCE [LARGE SCALE GENOMIC DNA]</scope>
    <source>
        <strain>C57BL/6J</strain>
    </source>
</reference>
<reference key="3">
    <citation type="journal article" date="2004" name="Genome Res.">
        <title>The status, quality, and expansion of the NIH full-length cDNA project: the Mammalian Gene Collection (MGC).</title>
        <authorList>
            <consortium name="The MGC Project Team"/>
        </authorList>
    </citation>
    <scope>NUCLEOTIDE SEQUENCE [LARGE SCALE MRNA] (ISOFORMS 1 AND 3)</scope>
    <source>
        <strain>FVB/N</strain>
        <tissue>Colon</tissue>
        <tissue>Kidney</tissue>
        <tissue>Mammary tumor</tissue>
    </source>
</reference>
<reference key="4">
    <citation type="journal article" date="2007" name="Mol. Cell. Proteomics">
        <title>Proteomics characterization of mouse kidney peroxisomes by tandem mass spectrometry and protein correlation profiling.</title>
        <authorList>
            <person name="Wiese S."/>
            <person name="Gronemeyer T."/>
            <person name="Ofman R."/>
            <person name="Kunze M."/>
            <person name="Grou C.P."/>
            <person name="Almeida J.A."/>
            <person name="Eisenacher M."/>
            <person name="Stephan C."/>
            <person name="Hayen H."/>
            <person name="Schollenberger L."/>
            <person name="Korosec T."/>
            <person name="Waterham H.R."/>
            <person name="Schliebs W."/>
            <person name="Erdmann R."/>
            <person name="Berger J."/>
            <person name="Meyer H.E."/>
            <person name="Just W."/>
            <person name="Azevedo J.E."/>
            <person name="Wanders R.J."/>
            <person name="Warscheid B."/>
        </authorList>
    </citation>
    <scope>SUBCELLULAR LOCATION</scope>
    <source>
        <tissue>Kidney</tissue>
    </source>
</reference>
<reference key="5">
    <citation type="journal article" date="2007" name="Proc. Natl. Acad. Sci. U.S.A.">
        <title>Large-scale phosphorylation analysis of mouse liver.</title>
        <authorList>
            <person name="Villen J."/>
            <person name="Beausoleil S.A."/>
            <person name="Gerber S.A."/>
            <person name="Gygi S.P."/>
        </authorList>
    </citation>
    <scope>PHOSPHORYLATION [LARGE SCALE ANALYSIS] AT SER-184; SER-185; SER-187; SER-191 AND SER-233</scope>
    <scope>IDENTIFICATION BY MASS SPECTROMETRY [LARGE SCALE ANALYSIS]</scope>
    <source>
        <tissue>Liver</tissue>
    </source>
</reference>
<reference key="6">
    <citation type="journal article" date="2010" name="Cell">
        <title>A tissue-specific atlas of mouse protein phosphorylation and expression.</title>
        <authorList>
            <person name="Huttlin E.L."/>
            <person name="Jedrychowski M.P."/>
            <person name="Elias J.E."/>
            <person name="Goswami T."/>
            <person name="Rad R."/>
            <person name="Beausoleil S.A."/>
            <person name="Villen J."/>
            <person name="Haas W."/>
            <person name="Sowa M.E."/>
            <person name="Gygi S.P."/>
        </authorList>
    </citation>
    <scope>PHOSPHORYLATION [LARGE SCALE ANALYSIS] AT SER-184; SER-185; SER-187 AND SER-191</scope>
    <scope>IDENTIFICATION BY MASS SPECTROMETRY [LARGE SCALE ANALYSIS]</scope>
    <source>
        <tissue>Brain</tissue>
        <tissue>Brown adipose tissue</tissue>
        <tissue>Kidney</tissue>
        <tissue>Liver</tissue>
        <tissue>Lung</tissue>
        <tissue>Spleen</tissue>
        <tissue>Testis</tissue>
    </source>
</reference>
<reference key="7">
    <citation type="journal article" date="2013" name="Proc. Natl. Acad. Sci. U.S.A.">
        <title>Label-free quantitative proteomics of the lysine acetylome in mitochondria identifies substrates of SIRT3 in metabolic pathways.</title>
        <authorList>
            <person name="Rardin M.J."/>
            <person name="Newman J.C."/>
            <person name="Held J.M."/>
            <person name="Cusack M.P."/>
            <person name="Sorensen D.J."/>
            <person name="Li B."/>
            <person name="Schilling B."/>
            <person name="Mooney S.D."/>
            <person name="Kahn C.R."/>
            <person name="Verdin E."/>
            <person name="Gibson B.W."/>
        </authorList>
    </citation>
    <scope>ACETYLATION [LARGE SCALE ANALYSIS] AT LYS-446</scope>
    <scope>IDENTIFICATION BY MASS SPECTROMETRY [LARGE SCALE ANALYSIS]</scope>
    <source>
        <tissue>Liver</tissue>
    </source>
</reference>
<gene>
    <name type="primary">Acbd5</name>
</gene>
<feature type="chain" id="PRO_0000287378" description="Acyl-CoA-binding domain-containing protein 5">
    <location>
        <begin position="1"/>
        <end position="508"/>
    </location>
</feature>
<feature type="transmembrane region" description="Helical" evidence="3">
    <location>
        <begin position="480"/>
        <end position="500"/>
    </location>
</feature>
<feature type="domain" description="ACB" evidence="4">
    <location>
        <begin position="44"/>
        <end position="133"/>
    </location>
</feature>
<feature type="region of interest" description="Disordered" evidence="5">
    <location>
        <begin position="175"/>
        <end position="215"/>
    </location>
</feature>
<feature type="region of interest" description="Disordered" evidence="5">
    <location>
        <begin position="240"/>
        <end position="300"/>
    </location>
</feature>
<feature type="region of interest" description="Disordered" evidence="5">
    <location>
        <begin position="318"/>
        <end position="340"/>
    </location>
</feature>
<feature type="region of interest" description="Disordered" evidence="5">
    <location>
        <begin position="353"/>
        <end position="419"/>
    </location>
</feature>
<feature type="coiled-coil region" evidence="3">
    <location>
        <begin position="181"/>
        <end position="214"/>
    </location>
</feature>
<feature type="coiled-coil region" evidence="3">
    <location>
        <begin position="428"/>
        <end position="453"/>
    </location>
</feature>
<feature type="compositionally biased region" description="Basic and acidic residues" evidence="5">
    <location>
        <begin position="198"/>
        <end position="215"/>
    </location>
</feature>
<feature type="compositionally biased region" description="Basic and acidic residues" evidence="5">
    <location>
        <begin position="240"/>
        <end position="260"/>
    </location>
</feature>
<feature type="compositionally biased region" description="Basic and acidic residues" evidence="5">
    <location>
        <begin position="353"/>
        <end position="376"/>
    </location>
</feature>
<feature type="compositionally biased region" description="Basic and acidic residues" evidence="5">
    <location>
        <begin position="408"/>
        <end position="418"/>
    </location>
</feature>
<feature type="binding site" evidence="1">
    <location>
        <begin position="55"/>
        <end position="64"/>
    </location>
    <ligand>
        <name>an acyl-CoA</name>
        <dbReference type="ChEBI" id="CHEBI:58342"/>
    </ligand>
</feature>
<feature type="binding site" evidence="1">
    <location>
        <begin position="75"/>
        <end position="79"/>
    </location>
    <ligand>
        <name>an acyl-CoA</name>
        <dbReference type="ChEBI" id="CHEBI:58342"/>
    </ligand>
</feature>
<feature type="binding site" evidence="1">
    <location>
        <position position="101"/>
    </location>
    <ligand>
        <name>an acyl-CoA</name>
        <dbReference type="ChEBI" id="CHEBI:58342"/>
    </ligand>
</feature>
<feature type="binding site" evidence="1">
    <location>
        <position position="120"/>
    </location>
    <ligand>
        <name>an acyl-CoA</name>
        <dbReference type="ChEBI" id="CHEBI:58342"/>
    </ligand>
</feature>
<feature type="modified residue" description="Phosphoserine" evidence="10 11">
    <location>
        <position position="184"/>
    </location>
</feature>
<feature type="modified residue" description="Phosphoserine" evidence="10 11">
    <location>
        <position position="185"/>
    </location>
</feature>
<feature type="modified residue" description="Phosphoserine" evidence="10 11">
    <location>
        <position position="187"/>
    </location>
</feature>
<feature type="modified residue" description="Phosphoserine" evidence="10 11">
    <location>
        <position position="191"/>
    </location>
</feature>
<feature type="modified residue" description="Phosphoserine" evidence="2">
    <location>
        <position position="206"/>
    </location>
</feature>
<feature type="modified residue" description="Phosphoserine" evidence="10">
    <location>
        <position position="233"/>
    </location>
</feature>
<feature type="modified residue" description="Phosphoserine" evidence="2">
    <location>
        <position position="303"/>
    </location>
</feature>
<feature type="modified residue" description="Phosphoserine" evidence="2">
    <location>
        <position position="405"/>
    </location>
</feature>
<feature type="modified residue" description="N6-acetyllysine" evidence="12">
    <location>
        <position position="446"/>
    </location>
</feature>
<feature type="splice variant" id="VSP_025450" description="In isoform 2 and isoform 3." evidence="7 8">
    <location>
        <begin position="1"/>
        <end position="36"/>
    </location>
</feature>
<feature type="splice variant" id="VSP_025451" description="In isoform 3." evidence="7 8">
    <original>R</original>
    <variation>RV</variation>
    <location>
        <position position="387"/>
    </location>
</feature>
<organism>
    <name type="scientific">Mus musculus</name>
    <name type="common">Mouse</name>
    <dbReference type="NCBI Taxonomy" id="10090"/>
    <lineage>
        <taxon>Eukaryota</taxon>
        <taxon>Metazoa</taxon>
        <taxon>Chordata</taxon>
        <taxon>Craniata</taxon>
        <taxon>Vertebrata</taxon>
        <taxon>Euteleostomi</taxon>
        <taxon>Mammalia</taxon>
        <taxon>Eutheria</taxon>
        <taxon>Euarchontoglires</taxon>
        <taxon>Glires</taxon>
        <taxon>Rodentia</taxon>
        <taxon>Myomorpha</taxon>
        <taxon>Muroidea</taxon>
        <taxon>Muridae</taxon>
        <taxon>Murinae</taxon>
        <taxon>Mus</taxon>
        <taxon>Mus</taxon>
    </lineage>
</organism>
<proteinExistence type="evidence at protein level"/>
<sequence length="508" mass="56614">MLFLAFHAGSWGSWCCCCCVITADRPWDRGRRWQLEMADTPSVYETRFEAAVKVIQSLPKNGSFQPTNEMMLKFYSFYKQATEGPCKLSRPGFWDPIGRYKWDAWSSLGDMTKEEAMIAYVEEMKKIIETMPMTEKVEELLHVIGPFYEIVEDKKSSKSSDLTSDLGNVLTSSNAKAVNGKAESSDSGAESEEEEAQEELKGAEQSGSDDKKTLKKSADKNLEIIVTNGYKGSFVQDIQSDIHTDSSRSTRSSEDEKPGDESSQQTGHTIVCAHQDRNEDPSEDASGIHHLTSDSDSEVYCDSMEQFGQEEYYLGGDPTQHLESSGFCEDAQQSPGNGSIGKMWMVAVKGKGEVKHGGEDGRSSSGAPHRETRGGESEDFSSVRRGRGNRIPHLSEGPKGRQVGSGGDGERWGSDRGSRGSLNEQIALVLIRLQEDMQNVLQRLHKLETLTASQAKLSLQTSNQPSSQRPAWWPFEMSPGALAFAIIWPFIAQWLAHLYYQRRRRKLN</sequence>
<protein>
    <recommendedName>
        <fullName>Acyl-CoA-binding domain-containing protein 5</fullName>
    </recommendedName>
</protein>
<dbReference type="EMBL" id="AK005001">
    <property type="protein sequence ID" value="BAB23735.2"/>
    <property type="molecule type" value="mRNA"/>
</dbReference>
<dbReference type="EMBL" id="AK050450">
    <property type="protein sequence ID" value="BAC34262.1"/>
    <property type="molecule type" value="mRNA"/>
</dbReference>
<dbReference type="EMBL" id="AK147839">
    <property type="protein sequence ID" value="BAE28174.1"/>
    <property type="molecule type" value="mRNA"/>
</dbReference>
<dbReference type="EMBL" id="AL845257">
    <property type="status" value="NOT_ANNOTATED_CDS"/>
    <property type="molecule type" value="Genomic_DNA"/>
</dbReference>
<dbReference type="EMBL" id="BC035202">
    <property type="protein sequence ID" value="AAH35202.1"/>
    <property type="status" value="ALT_INIT"/>
    <property type="molecule type" value="mRNA"/>
</dbReference>
<dbReference type="EMBL" id="BC053518">
    <property type="protein sequence ID" value="AAH53518.1"/>
    <property type="status" value="ALT_INIT"/>
    <property type="molecule type" value="mRNA"/>
</dbReference>
<dbReference type="EMBL" id="BC061484">
    <property type="protein sequence ID" value="AAH61484.2"/>
    <property type="molecule type" value="mRNA"/>
</dbReference>
<dbReference type="EMBL" id="BC084584">
    <property type="protein sequence ID" value="AAH84584.1"/>
    <property type="molecule type" value="mRNA"/>
</dbReference>
<dbReference type="CCDS" id="CCDS50514.1">
    <molecule id="Q5XG73-1"/>
</dbReference>
<dbReference type="CCDS" id="CCDS50515.1">
    <molecule id="Q5XG73-3"/>
</dbReference>
<dbReference type="CCDS" id="CCDS50516.1">
    <molecule id="Q5XG73-2"/>
</dbReference>
<dbReference type="RefSeq" id="NP_001095906.1">
    <molecule id="Q5XG73-2"/>
    <property type="nucleotide sequence ID" value="NM_001102436.2"/>
</dbReference>
<dbReference type="RefSeq" id="NP_001095907.1">
    <property type="nucleotide sequence ID" value="NM_001102437.1"/>
</dbReference>
<dbReference type="RefSeq" id="NP_001095908.1">
    <molecule id="Q5XG73-1"/>
    <property type="nucleotide sequence ID" value="NM_001102438.1"/>
</dbReference>
<dbReference type="RefSeq" id="NP_001393362.1">
    <molecule id="Q5XG73-2"/>
    <property type="nucleotide sequence ID" value="NM_001406433.1"/>
</dbReference>
<dbReference type="RefSeq" id="NP_083069.1">
    <molecule id="Q5XG73-3"/>
    <property type="nucleotide sequence ID" value="NM_028793.4"/>
</dbReference>
<dbReference type="SMR" id="Q5XG73"/>
<dbReference type="BioGRID" id="216536">
    <property type="interactions" value="13"/>
</dbReference>
<dbReference type="FunCoup" id="Q5XG73">
    <property type="interactions" value="3650"/>
</dbReference>
<dbReference type="STRING" id="10090.ENSMUSP00000110175"/>
<dbReference type="GlyGen" id="Q5XG73">
    <property type="glycosylation" value="2 sites, 1 N-linked glycan (1 site), 1 O-linked glycan (1 site)"/>
</dbReference>
<dbReference type="iPTMnet" id="Q5XG73"/>
<dbReference type="PhosphoSitePlus" id="Q5XG73"/>
<dbReference type="jPOST" id="Q5XG73"/>
<dbReference type="PaxDb" id="10090-ENSMUSP00000110172"/>
<dbReference type="ProteomicsDB" id="296439">
    <molecule id="Q5XG73-1"/>
</dbReference>
<dbReference type="ProteomicsDB" id="296440">
    <molecule id="Q5XG73-2"/>
</dbReference>
<dbReference type="ProteomicsDB" id="296441">
    <molecule id="Q5XG73-3"/>
</dbReference>
<dbReference type="Pumba" id="Q5XG73"/>
<dbReference type="Antibodypedia" id="2333">
    <property type="antibodies" value="123 antibodies from 23 providers"/>
</dbReference>
<dbReference type="Ensembl" id="ENSMUST00000028121.15">
    <molecule id="Q5XG73-3"/>
    <property type="protein sequence ID" value="ENSMUSP00000028121.9"/>
    <property type="gene ID" value="ENSMUSG00000026781.18"/>
</dbReference>
<dbReference type="Ensembl" id="ENSMUST00000114523.10">
    <molecule id="Q5XG73-3"/>
    <property type="protein sequence ID" value="ENSMUSP00000110169.3"/>
    <property type="gene ID" value="ENSMUSG00000026781.18"/>
</dbReference>
<dbReference type="Ensembl" id="ENSMUST00000114526.9">
    <molecule id="Q5XG73-1"/>
    <property type="protein sequence ID" value="ENSMUSP00000110172.2"/>
    <property type="gene ID" value="ENSMUSG00000026781.18"/>
</dbReference>
<dbReference type="Ensembl" id="ENSMUST00000227809.2">
    <molecule id="Q5XG73-2"/>
    <property type="protein sequence ID" value="ENSMUSP00000154023.2"/>
    <property type="gene ID" value="ENSMUSG00000026781.18"/>
</dbReference>
<dbReference type="GeneID" id="74159"/>
<dbReference type="KEGG" id="mmu:74159"/>
<dbReference type="UCSC" id="uc008inx.1">
    <molecule id="Q5XG73-1"/>
    <property type="organism name" value="mouse"/>
</dbReference>
<dbReference type="UCSC" id="uc008iny.1">
    <molecule id="Q5XG73-3"/>
    <property type="organism name" value="mouse"/>
</dbReference>
<dbReference type="AGR" id="MGI:1921409"/>
<dbReference type="CTD" id="91452"/>
<dbReference type="MGI" id="MGI:1921409">
    <property type="gene designation" value="Acbd5"/>
</dbReference>
<dbReference type="VEuPathDB" id="HostDB:ENSMUSG00000026781"/>
<dbReference type="eggNOG" id="KOG0817">
    <property type="taxonomic scope" value="Eukaryota"/>
</dbReference>
<dbReference type="GeneTree" id="ENSGT00940000156350"/>
<dbReference type="HOGENOM" id="CLU_034436_0_0_1"/>
<dbReference type="InParanoid" id="Q5XG73"/>
<dbReference type="OMA" id="RNPSWWP"/>
<dbReference type="PhylomeDB" id="Q5XG73"/>
<dbReference type="TreeFam" id="TF319446"/>
<dbReference type="Reactome" id="R-MMU-390918">
    <property type="pathway name" value="Peroxisomal lipid metabolism"/>
</dbReference>
<dbReference type="Reactome" id="R-MMU-8980692">
    <property type="pathway name" value="RHOA GTPase cycle"/>
</dbReference>
<dbReference type="Reactome" id="R-MMU-9013106">
    <property type="pathway name" value="RHOC GTPase cycle"/>
</dbReference>
<dbReference type="Reactome" id="R-MMU-9603798">
    <property type="pathway name" value="Class I peroxisomal membrane protein import"/>
</dbReference>
<dbReference type="BioGRID-ORCS" id="74159">
    <property type="hits" value="4 hits in 79 CRISPR screens"/>
</dbReference>
<dbReference type="CD-CODE" id="CE726F99">
    <property type="entry name" value="Postsynaptic density"/>
</dbReference>
<dbReference type="ChiTaRS" id="Acbd5">
    <property type="organism name" value="mouse"/>
</dbReference>
<dbReference type="PRO" id="PR:Q5XG73"/>
<dbReference type="Proteomes" id="UP000000589">
    <property type="component" value="Chromosome 2"/>
</dbReference>
<dbReference type="RNAct" id="Q5XG73">
    <property type="molecule type" value="protein"/>
</dbReference>
<dbReference type="Bgee" id="ENSMUSG00000026781">
    <property type="expression patterns" value="Expressed in seminal vesicle and 229 other cell types or tissues"/>
</dbReference>
<dbReference type="ExpressionAtlas" id="Q5XG73">
    <property type="expression patterns" value="baseline and differential"/>
</dbReference>
<dbReference type="GO" id="GO:0005778">
    <property type="term" value="C:peroxisomal membrane"/>
    <property type="evidence" value="ECO:0007669"/>
    <property type="project" value="UniProtKB-SubCell"/>
</dbReference>
<dbReference type="GO" id="GO:0000062">
    <property type="term" value="F:fatty-acyl-CoA binding"/>
    <property type="evidence" value="ECO:0007669"/>
    <property type="project" value="InterPro"/>
</dbReference>
<dbReference type="GO" id="GO:0000425">
    <property type="term" value="P:pexophagy"/>
    <property type="evidence" value="ECO:0007669"/>
    <property type="project" value="InterPro"/>
</dbReference>
<dbReference type="CDD" id="cd00435">
    <property type="entry name" value="ACBP"/>
    <property type="match status" value="1"/>
</dbReference>
<dbReference type="FunFam" id="1.20.80.10:FF:000010">
    <property type="entry name" value="Acyl-CoA-binding domain-containing protein 5"/>
    <property type="match status" value="1"/>
</dbReference>
<dbReference type="Gene3D" id="1.20.80.10">
    <property type="match status" value="1"/>
</dbReference>
<dbReference type="InterPro" id="IPR016347">
    <property type="entry name" value="ACBD5"/>
</dbReference>
<dbReference type="InterPro" id="IPR022408">
    <property type="entry name" value="Acyl-CoA-binding_prot_CS"/>
</dbReference>
<dbReference type="InterPro" id="IPR000582">
    <property type="entry name" value="Acyl-CoA-binding_protein"/>
</dbReference>
<dbReference type="InterPro" id="IPR035984">
    <property type="entry name" value="Acyl-CoA-binding_sf"/>
</dbReference>
<dbReference type="InterPro" id="IPR014352">
    <property type="entry name" value="FERM/acyl-CoA-bd_prot_sf"/>
</dbReference>
<dbReference type="PANTHER" id="PTHR23310:SF6">
    <property type="entry name" value="ACYL-COA-BINDING DOMAIN-CONTAINING PROTEIN 5"/>
    <property type="match status" value="1"/>
</dbReference>
<dbReference type="PANTHER" id="PTHR23310">
    <property type="entry name" value="ACYL-COA-BINDING PROTEIN, ACBP"/>
    <property type="match status" value="1"/>
</dbReference>
<dbReference type="Pfam" id="PF00887">
    <property type="entry name" value="ACBP"/>
    <property type="match status" value="1"/>
</dbReference>
<dbReference type="PIRSF" id="PIRSF002412">
    <property type="entry name" value="MA_DBI"/>
    <property type="match status" value="1"/>
</dbReference>
<dbReference type="PRINTS" id="PR00689">
    <property type="entry name" value="ACOABINDINGP"/>
</dbReference>
<dbReference type="SUPFAM" id="SSF47027">
    <property type="entry name" value="Acyl-CoA binding protein"/>
    <property type="match status" value="1"/>
</dbReference>
<dbReference type="PROSITE" id="PS00880">
    <property type="entry name" value="ACB_1"/>
    <property type="match status" value="1"/>
</dbReference>
<dbReference type="PROSITE" id="PS51228">
    <property type="entry name" value="ACB_2"/>
    <property type="match status" value="1"/>
</dbReference>